<organism>
    <name type="scientific">Klebsiella pneumoniae (strain 342)</name>
    <dbReference type="NCBI Taxonomy" id="507522"/>
    <lineage>
        <taxon>Bacteria</taxon>
        <taxon>Pseudomonadati</taxon>
        <taxon>Pseudomonadota</taxon>
        <taxon>Gammaproteobacteria</taxon>
        <taxon>Enterobacterales</taxon>
        <taxon>Enterobacteriaceae</taxon>
        <taxon>Klebsiella/Raoultella group</taxon>
        <taxon>Klebsiella</taxon>
        <taxon>Klebsiella pneumoniae complex</taxon>
    </lineage>
</organism>
<keyword id="KW-0963">Cytoplasm</keyword>
<keyword id="KW-0269">Exonuclease</keyword>
<keyword id="KW-0378">Hydrolase</keyword>
<keyword id="KW-0540">Nuclease</keyword>
<accession>B5XNM2</accession>
<feature type="chain" id="PRO_1000122068" description="Exodeoxyribonuclease 7 large subunit">
    <location>
        <begin position="1"/>
        <end position="463"/>
    </location>
</feature>
<comment type="function">
    <text evidence="1">Bidirectionally degrades single-stranded DNA into large acid-insoluble oligonucleotides, which are then degraded further into small acid-soluble oligonucleotides.</text>
</comment>
<comment type="catalytic activity">
    <reaction evidence="1">
        <text>Exonucleolytic cleavage in either 5'- to 3'- or 3'- to 5'-direction to yield nucleoside 5'-phosphates.</text>
        <dbReference type="EC" id="3.1.11.6"/>
    </reaction>
</comment>
<comment type="subunit">
    <text evidence="1">Heterooligomer composed of large and small subunits.</text>
</comment>
<comment type="subcellular location">
    <subcellularLocation>
        <location evidence="1">Cytoplasm</location>
    </subcellularLocation>
</comment>
<comment type="similarity">
    <text evidence="1">Belongs to the XseA family.</text>
</comment>
<proteinExistence type="inferred from homology"/>
<dbReference type="EC" id="3.1.11.6" evidence="1"/>
<dbReference type="EMBL" id="CP000964">
    <property type="protein sequence ID" value="ACI10185.1"/>
    <property type="molecule type" value="Genomic_DNA"/>
</dbReference>
<dbReference type="SMR" id="B5XNM2"/>
<dbReference type="KEGG" id="kpe:KPK_1281"/>
<dbReference type="HOGENOM" id="CLU_023625_3_1_6"/>
<dbReference type="Proteomes" id="UP000001734">
    <property type="component" value="Chromosome"/>
</dbReference>
<dbReference type="GO" id="GO:0005737">
    <property type="term" value="C:cytoplasm"/>
    <property type="evidence" value="ECO:0007669"/>
    <property type="project" value="UniProtKB-SubCell"/>
</dbReference>
<dbReference type="GO" id="GO:0009318">
    <property type="term" value="C:exodeoxyribonuclease VII complex"/>
    <property type="evidence" value="ECO:0007669"/>
    <property type="project" value="InterPro"/>
</dbReference>
<dbReference type="GO" id="GO:0008855">
    <property type="term" value="F:exodeoxyribonuclease VII activity"/>
    <property type="evidence" value="ECO:0007669"/>
    <property type="project" value="UniProtKB-UniRule"/>
</dbReference>
<dbReference type="GO" id="GO:0003676">
    <property type="term" value="F:nucleic acid binding"/>
    <property type="evidence" value="ECO:0007669"/>
    <property type="project" value="InterPro"/>
</dbReference>
<dbReference type="GO" id="GO:0006308">
    <property type="term" value="P:DNA catabolic process"/>
    <property type="evidence" value="ECO:0007669"/>
    <property type="project" value="UniProtKB-UniRule"/>
</dbReference>
<dbReference type="CDD" id="cd04489">
    <property type="entry name" value="ExoVII_LU_OBF"/>
    <property type="match status" value="1"/>
</dbReference>
<dbReference type="HAMAP" id="MF_00378">
    <property type="entry name" value="Exonuc_7_L"/>
    <property type="match status" value="1"/>
</dbReference>
<dbReference type="InterPro" id="IPR003753">
    <property type="entry name" value="Exonuc_VII_L"/>
</dbReference>
<dbReference type="InterPro" id="IPR020579">
    <property type="entry name" value="Exonuc_VII_lsu_C"/>
</dbReference>
<dbReference type="InterPro" id="IPR025824">
    <property type="entry name" value="OB-fold_nuc-bd_dom"/>
</dbReference>
<dbReference type="NCBIfam" id="TIGR00237">
    <property type="entry name" value="xseA"/>
    <property type="match status" value="1"/>
</dbReference>
<dbReference type="PANTHER" id="PTHR30008">
    <property type="entry name" value="EXODEOXYRIBONUCLEASE 7 LARGE SUBUNIT"/>
    <property type="match status" value="1"/>
</dbReference>
<dbReference type="PANTHER" id="PTHR30008:SF0">
    <property type="entry name" value="EXODEOXYRIBONUCLEASE 7 LARGE SUBUNIT"/>
    <property type="match status" value="1"/>
</dbReference>
<dbReference type="Pfam" id="PF02601">
    <property type="entry name" value="Exonuc_VII_L"/>
    <property type="match status" value="1"/>
</dbReference>
<dbReference type="Pfam" id="PF13742">
    <property type="entry name" value="tRNA_anti_2"/>
    <property type="match status" value="1"/>
</dbReference>
<protein>
    <recommendedName>
        <fullName evidence="1">Exodeoxyribonuclease 7 large subunit</fullName>
        <ecNumber evidence="1">3.1.11.6</ecNumber>
    </recommendedName>
    <alternativeName>
        <fullName evidence="1">Exodeoxyribonuclease VII large subunit</fullName>
        <shortName evidence="1">Exonuclease VII large subunit</shortName>
    </alternativeName>
</protein>
<gene>
    <name evidence="1" type="primary">xseA</name>
    <name type="ordered locus">KPK_1281</name>
</gene>
<name>EX7L_KLEP3</name>
<sequence>MLPSQSPAIFTVSRLNQTVRLLLEREMGQVWISGEISNFSQPSSGHWYFTLKDDNAQVRCAMFRNSNRRVTFRPQHGQQVLVRANITLYEPRGDYQIIVESMQPAGEGLLQQKYEQLKAQLTAEGLFEQKHKQALPSPAHCVGVITSKTGAALHDILHVLRRRDPGLPVIIYPTAVQGDDAPGQIVRAIALANARQECDVLIVGRGGGSLEDLWSFNDERVARAIFASQIPIVSAVGHETDVTIADFVADLRAPTPSAAAEIVSRNQQELLRQLQSGQQRLEMAMDYFLASRQRRFTQLFHRLQQQHPQLRLARQQTALERLRQRMRIAVESQLKRAEQRQKRTVQRLDHYNPQPRIHRAQSRIQQLEYRLAENMRGRLSERRERFGNAVTHLEAVSPLATLARGYSVTSVNDGTVLKQTKQVKTGDLLTTRLKDGWVESEVKQIAPVKKTRARKPSPTKPAE</sequence>
<evidence type="ECO:0000255" key="1">
    <source>
        <dbReference type="HAMAP-Rule" id="MF_00378"/>
    </source>
</evidence>
<reference key="1">
    <citation type="journal article" date="2008" name="PLoS Genet.">
        <title>Complete genome sequence of the N2-fixing broad host range endophyte Klebsiella pneumoniae 342 and virulence predictions verified in mice.</title>
        <authorList>
            <person name="Fouts D.E."/>
            <person name="Tyler H.L."/>
            <person name="DeBoy R.T."/>
            <person name="Daugherty S."/>
            <person name="Ren Q."/>
            <person name="Badger J.H."/>
            <person name="Durkin A.S."/>
            <person name="Huot H."/>
            <person name="Shrivastava S."/>
            <person name="Kothari S."/>
            <person name="Dodson R.J."/>
            <person name="Mohamoud Y."/>
            <person name="Khouri H."/>
            <person name="Roesch L.F.W."/>
            <person name="Krogfelt K.A."/>
            <person name="Struve C."/>
            <person name="Triplett E.W."/>
            <person name="Methe B.A."/>
        </authorList>
    </citation>
    <scope>NUCLEOTIDE SEQUENCE [LARGE SCALE GENOMIC DNA]</scope>
    <source>
        <strain>342</strain>
    </source>
</reference>